<proteinExistence type="inferred from homology"/>
<name>Y1221_CLOK1</name>
<dbReference type="EMBL" id="AP009049">
    <property type="protein sequence ID" value="BAH06272.1"/>
    <property type="molecule type" value="Genomic_DNA"/>
</dbReference>
<dbReference type="RefSeq" id="WP_012101712.1">
    <property type="nucleotide sequence ID" value="NC_011837.1"/>
</dbReference>
<dbReference type="SMR" id="B9E197"/>
<dbReference type="KEGG" id="ckr:CKR_1221"/>
<dbReference type="HOGENOM" id="CLU_162466_0_0_9"/>
<dbReference type="Proteomes" id="UP000007969">
    <property type="component" value="Chromosome"/>
</dbReference>
<dbReference type="HAMAP" id="MF_01507">
    <property type="entry name" value="UPF0297"/>
    <property type="match status" value="1"/>
</dbReference>
<dbReference type="InterPro" id="IPR009309">
    <property type="entry name" value="IreB"/>
</dbReference>
<dbReference type="NCBIfam" id="NF003997">
    <property type="entry name" value="PRK05473.1"/>
    <property type="match status" value="1"/>
</dbReference>
<dbReference type="PANTHER" id="PTHR40067">
    <property type="entry name" value="UPF0297 PROTEIN YRZL"/>
    <property type="match status" value="1"/>
</dbReference>
<dbReference type="PANTHER" id="PTHR40067:SF1">
    <property type="entry name" value="UPF0297 PROTEIN YRZL"/>
    <property type="match status" value="1"/>
</dbReference>
<dbReference type="Pfam" id="PF06135">
    <property type="entry name" value="IreB"/>
    <property type="match status" value="1"/>
</dbReference>
<dbReference type="PIRSF" id="PIRSF037258">
    <property type="entry name" value="DUF965_bac"/>
    <property type="match status" value="1"/>
</dbReference>
<feature type="chain" id="PRO_1000185041" description="UPF0297 protein CKR_1221">
    <location>
        <begin position="1"/>
        <end position="83"/>
    </location>
</feature>
<organism>
    <name type="scientific">Clostridium kluyveri (strain NBRC 12016)</name>
    <dbReference type="NCBI Taxonomy" id="583346"/>
    <lineage>
        <taxon>Bacteria</taxon>
        <taxon>Bacillati</taxon>
        <taxon>Bacillota</taxon>
        <taxon>Clostridia</taxon>
        <taxon>Eubacteriales</taxon>
        <taxon>Clostridiaceae</taxon>
        <taxon>Clostridium</taxon>
    </lineage>
</organism>
<reference key="1">
    <citation type="submission" date="2005-09" db="EMBL/GenBank/DDBJ databases">
        <title>Complete genome sequence of Clostridium kluyveri and comparative genomics of Clostridia species.</title>
        <authorList>
            <person name="Inui M."/>
            <person name="Nonaka H."/>
            <person name="Shinoda Y."/>
            <person name="Ikenaga Y."/>
            <person name="Abe M."/>
            <person name="Naito K."/>
            <person name="Vertes A.A."/>
            <person name="Yukawa H."/>
        </authorList>
    </citation>
    <scope>NUCLEOTIDE SEQUENCE [LARGE SCALE GENOMIC DNA]</scope>
    <source>
        <strain>NBRC 12016</strain>
    </source>
</reference>
<comment type="similarity">
    <text evidence="1">Belongs to the UPF0297 family.</text>
</comment>
<accession>B9E197</accession>
<sequence>MSKDNTIQFDISESKKALTREILTEVYDSLIKKGYNPVNQLVGYLISGDPTYITNYNGARSLVRKLERDEILEEVLKAYLGIK</sequence>
<protein>
    <recommendedName>
        <fullName evidence="1">UPF0297 protein CKR_1221</fullName>
    </recommendedName>
</protein>
<gene>
    <name type="ordered locus">CKR_1221</name>
</gene>
<evidence type="ECO:0000255" key="1">
    <source>
        <dbReference type="HAMAP-Rule" id="MF_01507"/>
    </source>
</evidence>